<sequence length="700" mass="76871">MAQEVLTDLNKVRNIGIMAHIDAGKTTTTERILFYTGVNYKIGETHDGASTTDWMEQEKERGITITSAAVTCFWNNNQINIIDTPGHVDFTVEVERSLRVLDGAVAVFDGKEGVEPQSEQVWRQAAKYDVPRICFVNKMDKMGADFYFTVQTIIDRLGAKPLVLQLPIGAEDDFDGVVDLVEMKAVTWRGTVAIGAEPTIEEIPADLADKAAEYREKLLETVAESDEKLMEKYFAGEELSVEEIKGAIRKMTVNSELYPVLCGSAFKNKGVQPMLDAVIDYLPNPLDIGEVQGHALGNEEEVLTRKPSKEEPFSALAFKIASHPFFGKLTFVRVYSGRIDPGAQVMNATKGKKERIGKLFQMHANKENPVDEAVAGHIYAMIGLKDTTTGDTLCAQDAPIVLESMSFPDPVIQVSIEPKTKSDQEKLGTAIQKLAEEDPTFSVELDEETGQTVIGGMGELHLDILVDRMRREFKVEANVGKPQVAYRETITKKVEKHDYTHKKQTGGSGQFAKVIIALEPFVGEDGASYEFENKVSGGRIPREYIPSVDAGAQDAMQYGVLAGYPLVNLKLSLLDGAYHDVDSSEMAFKVAGSQALKEAARKAGPVILEPLMAVEVTTPEEYMGDVIGDLNSRRGQIQAMEERSGARVVKALVPLSEMFGYIGDLRSKTQGRANFSMVFDSYAEVPANVSKEIIAKATGE</sequence>
<name>EFG_RHOOB</name>
<keyword id="KW-0963">Cytoplasm</keyword>
<keyword id="KW-0251">Elongation factor</keyword>
<keyword id="KW-0342">GTP-binding</keyword>
<keyword id="KW-0547">Nucleotide-binding</keyword>
<keyword id="KW-0648">Protein biosynthesis</keyword>
<accession>C1AYS4</accession>
<protein>
    <recommendedName>
        <fullName evidence="1">Elongation factor G</fullName>
        <shortName evidence="1">EF-G</shortName>
    </recommendedName>
</protein>
<gene>
    <name evidence="1" type="primary">fusA</name>
    <name type="ordered locus">ROP_16050</name>
</gene>
<comment type="function">
    <text evidence="1">Catalyzes the GTP-dependent ribosomal translocation step during translation elongation. During this step, the ribosome changes from the pre-translocational (PRE) to the post-translocational (POST) state as the newly formed A-site-bound peptidyl-tRNA and P-site-bound deacylated tRNA move to the P and E sites, respectively. Catalyzes the coordinated movement of the two tRNA molecules, the mRNA and conformational changes in the ribosome.</text>
</comment>
<comment type="subcellular location">
    <subcellularLocation>
        <location evidence="1">Cytoplasm</location>
    </subcellularLocation>
</comment>
<comment type="similarity">
    <text evidence="1">Belongs to the TRAFAC class translation factor GTPase superfamily. Classic translation factor GTPase family. EF-G/EF-2 subfamily.</text>
</comment>
<dbReference type="EMBL" id="AP011115">
    <property type="protein sequence ID" value="BAH49852.1"/>
    <property type="molecule type" value="Genomic_DNA"/>
</dbReference>
<dbReference type="RefSeq" id="WP_012688821.1">
    <property type="nucleotide sequence ID" value="NC_012522.1"/>
</dbReference>
<dbReference type="SMR" id="C1AYS4"/>
<dbReference type="STRING" id="632772.ROP_16050"/>
<dbReference type="KEGG" id="rop:ROP_16050"/>
<dbReference type="PATRIC" id="fig|632772.20.peg.1685"/>
<dbReference type="HOGENOM" id="CLU_002794_4_1_11"/>
<dbReference type="OrthoDB" id="9801472at2"/>
<dbReference type="Proteomes" id="UP000002212">
    <property type="component" value="Chromosome"/>
</dbReference>
<dbReference type="GO" id="GO:0005737">
    <property type="term" value="C:cytoplasm"/>
    <property type="evidence" value="ECO:0007669"/>
    <property type="project" value="UniProtKB-SubCell"/>
</dbReference>
<dbReference type="GO" id="GO:0005525">
    <property type="term" value="F:GTP binding"/>
    <property type="evidence" value="ECO:0007669"/>
    <property type="project" value="UniProtKB-UniRule"/>
</dbReference>
<dbReference type="GO" id="GO:0003924">
    <property type="term" value="F:GTPase activity"/>
    <property type="evidence" value="ECO:0007669"/>
    <property type="project" value="InterPro"/>
</dbReference>
<dbReference type="GO" id="GO:0003746">
    <property type="term" value="F:translation elongation factor activity"/>
    <property type="evidence" value="ECO:0007669"/>
    <property type="project" value="UniProtKB-UniRule"/>
</dbReference>
<dbReference type="GO" id="GO:0032790">
    <property type="term" value="P:ribosome disassembly"/>
    <property type="evidence" value="ECO:0007669"/>
    <property type="project" value="TreeGrafter"/>
</dbReference>
<dbReference type="CDD" id="cd01886">
    <property type="entry name" value="EF-G"/>
    <property type="match status" value="1"/>
</dbReference>
<dbReference type="CDD" id="cd16262">
    <property type="entry name" value="EFG_III"/>
    <property type="match status" value="1"/>
</dbReference>
<dbReference type="CDD" id="cd01434">
    <property type="entry name" value="EFG_mtEFG1_IV"/>
    <property type="match status" value="1"/>
</dbReference>
<dbReference type="CDD" id="cd03713">
    <property type="entry name" value="EFG_mtEFG_C"/>
    <property type="match status" value="1"/>
</dbReference>
<dbReference type="CDD" id="cd04088">
    <property type="entry name" value="EFG_mtEFG_II"/>
    <property type="match status" value="1"/>
</dbReference>
<dbReference type="FunFam" id="2.40.30.10:FF:000006">
    <property type="entry name" value="Elongation factor G"/>
    <property type="match status" value="1"/>
</dbReference>
<dbReference type="FunFam" id="3.30.230.10:FF:000003">
    <property type="entry name" value="Elongation factor G"/>
    <property type="match status" value="1"/>
</dbReference>
<dbReference type="FunFam" id="3.30.70.240:FF:000001">
    <property type="entry name" value="Elongation factor G"/>
    <property type="match status" value="1"/>
</dbReference>
<dbReference type="FunFam" id="3.30.70.870:FF:000001">
    <property type="entry name" value="Elongation factor G"/>
    <property type="match status" value="1"/>
</dbReference>
<dbReference type="FunFam" id="3.40.50.300:FF:000029">
    <property type="entry name" value="Elongation factor G"/>
    <property type="match status" value="1"/>
</dbReference>
<dbReference type="Gene3D" id="3.30.230.10">
    <property type="match status" value="1"/>
</dbReference>
<dbReference type="Gene3D" id="3.30.70.240">
    <property type="match status" value="1"/>
</dbReference>
<dbReference type="Gene3D" id="3.30.70.870">
    <property type="entry name" value="Elongation Factor G (Translational Gtpase), domain 3"/>
    <property type="match status" value="1"/>
</dbReference>
<dbReference type="Gene3D" id="3.40.50.300">
    <property type="entry name" value="P-loop containing nucleotide triphosphate hydrolases"/>
    <property type="match status" value="1"/>
</dbReference>
<dbReference type="Gene3D" id="2.40.30.10">
    <property type="entry name" value="Translation factors"/>
    <property type="match status" value="1"/>
</dbReference>
<dbReference type="HAMAP" id="MF_00054_B">
    <property type="entry name" value="EF_G_EF_2_B"/>
    <property type="match status" value="1"/>
</dbReference>
<dbReference type="InterPro" id="IPR041095">
    <property type="entry name" value="EFG_II"/>
</dbReference>
<dbReference type="InterPro" id="IPR009022">
    <property type="entry name" value="EFG_III"/>
</dbReference>
<dbReference type="InterPro" id="IPR035647">
    <property type="entry name" value="EFG_III/V"/>
</dbReference>
<dbReference type="InterPro" id="IPR047872">
    <property type="entry name" value="EFG_IV"/>
</dbReference>
<dbReference type="InterPro" id="IPR035649">
    <property type="entry name" value="EFG_V"/>
</dbReference>
<dbReference type="InterPro" id="IPR000640">
    <property type="entry name" value="EFG_V-like"/>
</dbReference>
<dbReference type="InterPro" id="IPR004161">
    <property type="entry name" value="EFTu-like_2"/>
</dbReference>
<dbReference type="InterPro" id="IPR031157">
    <property type="entry name" value="G_TR_CS"/>
</dbReference>
<dbReference type="InterPro" id="IPR027417">
    <property type="entry name" value="P-loop_NTPase"/>
</dbReference>
<dbReference type="InterPro" id="IPR020568">
    <property type="entry name" value="Ribosomal_Su5_D2-typ_SF"/>
</dbReference>
<dbReference type="InterPro" id="IPR014721">
    <property type="entry name" value="Ribsml_uS5_D2-typ_fold_subgr"/>
</dbReference>
<dbReference type="InterPro" id="IPR005225">
    <property type="entry name" value="Small_GTP-bd"/>
</dbReference>
<dbReference type="InterPro" id="IPR000795">
    <property type="entry name" value="T_Tr_GTP-bd_dom"/>
</dbReference>
<dbReference type="InterPro" id="IPR009000">
    <property type="entry name" value="Transl_B-barrel_sf"/>
</dbReference>
<dbReference type="InterPro" id="IPR004540">
    <property type="entry name" value="Transl_elong_EFG/EF2"/>
</dbReference>
<dbReference type="InterPro" id="IPR005517">
    <property type="entry name" value="Transl_elong_EFG/EF2_IV"/>
</dbReference>
<dbReference type="NCBIfam" id="TIGR00484">
    <property type="entry name" value="EF-G"/>
    <property type="match status" value="1"/>
</dbReference>
<dbReference type="NCBIfam" id="NF009381">
    <property type="entry name" value="PRK12740.1-5"/>
    <property type="match status" value="1"/>
</dbReference>
<dbReference type="NCBIfam" id="TIGR00231">
    <property type="entry name" value="small_GTP"/>
    <property type="match status" value="1"/>
</dbReference>
<dbReference type="PANTHER" id="PTHR43261:SF1">
    <property type="entry name" value="RIBOSOME-RELEASING FACTOR 2, MITOCHONDRIAL"/>
    <property type="match status" value="1"/>
</dbReference>
<dbReference type="PANTHER" id="PTHR43261">
    <property type="entry name" value="TRANSLATION ELONGATION FACTOR G-RELATED"/>
    <property type="match status" value="1"/>
</dbReference>
<dbReference type="Pfam" id="PF00679">
    <property type="entry name" value="EFG_C"/>
    <property type="match status" value="1"/>
</dbReference>
<dbReference type="Pfam" id="PF14492">
    <property type="entry name" value="EFG_III"/>
    <property type="match status" value="1"/>
</dbReference>
<dbReference type="Pfam" id="PF03764">
    <property type="entry name" value="EFG_IV"/>
    <property type="match status" value="1"/>
</dbReference>
<dbReference type="Pfam" id="PF00009">
    <property type="entry name" value="GTP_EFTU"/>
    <property type="match status" value="1"/>
</dbReference>
<dbReference type="Pfam" id="PF03144">
    <property type="entry name" value="GTP_EFTU_D2"/>
    <property type="match status" value="1"/>
</dbReference>
<dbReference type="PRINTS" id="PR00315">
    <property type="entry name" value="ELONGATNFCT"/>
</dbReference>
<dbReference type="SMART" id="SM00838">
    <property type="entry name" value="EFG_C"/>
    <property type="match status" value="1"/>
</dbReference>
<dbReference type="SMART" id="SM00889">
    <property type="entry name" value="EFG_IV"/>
    <property type="match status" value="1"/>
</dbReference>
<dbReference type="SUPFAM" id="SSF54980">
    <property type="entry name" value="EF-G C-terminal domain-like"/>
    <property type="match status" value="2"/>
</dbReference>
<dbReference type="SUPFAM" id="SSF52540">
    <property type="entry name" value="P-loop containing nucleoside triphosphate hydrolases"/>
    <property type="match status" value="1"/>
</dbReference>
<dbReference type="SUPFAM" id="SSF54211">
    <property type="entry name" value="Ribosomal protein S5 domain 2-like"/>
    <property type="match status" value="1"/>
</dbReference>
<dbReference type="SUPFAM" id="SSF50447">
    <property type="entry name" value="Translation proteins"/>
    <property type="match status" value="1"/>
</dbReference>
<dbReference type="PROSITE" id="PS00301">
    <property type="entry name" value="G_TR_1"/>
    <property type="match status" value="1"/>
</dbReference>
<dbReference type="PROSITE" id="PS51722">
    <property type="entry name" value="G_TR_2"/>
    <property type="match status" value="1"/>
</dbReference>
<evidence type="ECO:0000255" key="1">
    <source>
        <dbReference type="HAMAP-Rule" id="MF_00054"/>
    </source>
</evidence>
<feature type="chain" id="PRO_1000201484" description="Elongation factor G">
    <location>
        <begin position="1"/>
        <end position="700"/>
    </location>
</feature>
<feature type="domain" description="tr-type G">
    <location>
        <begin position="10"/>
        <end position="286"/>
    </location>
</feature>
<feature type="binding site" evidence="1">
    <location>
        <begin position="19"/>
        <end position="26"/>
    </location>
    <ligand>
        <name>GTP</name>
        <dbReference type="ChEBI" id="CHEBI:37565"/>
    </ligand>
</feature>
<feature type="binding site" evidence="1">
    <location>
        <begin position="83"/>
        <end position="87"/>
    </location>
    <ligand>
        <name>GTP</name>
        <dbReference type="ChEBI" id="CHEBI:37565"/>
    </ligand>
</feature>
<feature type="binding site" evidence="1">
    <location>
        <begin position="137"/>
        <end position="140"/>
    </location>
    <ligand>
        <name>GTP</name>
        <dbReference type="ChEBI" id="CHEBI:37565"/>
    </ligand>
</feature>
<proteinExistence type="inferred from homology"/>
<organism>
    <name type="scientific">Rhodococcus opacus (strain B4)</name>
    <dbReference type="NCBI Taxonomy" id="632772"/>
    <lineage>
        <taxon>Bacteria</taxon>
        <taxon>Bacillati</taxon>
        <taxon>Actinomycetota</taxon>
        <taxon>Actinomycetes</taxon>
        <taxon>Mycobacteriales</taxon>
        <taxon>Nocardiaceae</taxon>
        <taxon>Rhodococcus</taxon>
    </lineage>
</organism>
<reference key="1">
    <citation type="submission" date="2009-03" db="EMBL/GenBank/DDBJ databases">
        <title>Comparison of the complete genome sequences of Rhodococcus erythropolis PR4 and Rhodococcus opacus B4.</title>
        <authorList>
            <person name="Takarada H."/>
            <person name="Sekine M."/>
            <person name="Hosoyama A."/>
            <person name="Yamada R."/>
            <person name="Fujisawa T."/>
            <person name="Omata S."/>
            <person name="Shimizu A."/>
            <person name="Tsukatani N."/>
            <person name="Tanikawa S."/>
            <person name="Fujita N."/>
            <person name="Harayama S."/>
        </authorList>
    </citation>
    <scope>NUCLEOTIDE SEQUENCE [LARGE SCALE GENOMIC DNA]</scope>
    <source>
        <strain>B4</strain>
    </source>
</reference>